<comment type="function">
    <text evidence="1">DNA-dependent RNA polymerase catalyzes the transcription of DNA into RNA using the four ribonucleoside triphosphates as substrates.</text>
</comment>
<comment type="catalytic activity">
    <reaction evidence="1">
        <text>RNA(n) + a ribonucleoside 5'-triphosphate = RNA(n+1) + diphosphate</text>
        <dbReference type="Rhea" id="RHEA:21248"/>
        <dbReference type="Rhea" id="RHEA-COMP:14527"/>
        <dbReference type="Rhea" id="RHEA-COMP:17342"/>
        <dbReference type="ChEBI" id="CHEBI:33019"/>
        <dbReference type="ChEBI" id="CHEBI:61557"/>
        <dbReference type="ChEBI" id="CHEBI:140395"/>
        <dbReference type="EC" id="2.7.7.6"/>
    </reaction>
</comment>
<comment type="cofactor">
    <cofactor evidence="1">
        <name>Mg(2+)</name>
        <dbReference type="ChEBI" id="CHEBI:18420"/>
    </cofactor>
    <text evidence="1">Binds 1 Mg(2+) ion per subunit.</text>
</comment>
<comment type="cofactor">
    <cofactor evidence="1">
        <name>Zn(2+)</name>
        <dbReference type="ChEBI" id="CHEBI:29105"/>
    </cofactor>
    <text evidence="1">Binds 1 Zn(2+) ion per subunit.</text>
</comment>
<comment type="subunit">
    <text evidence="1">In cyanobacteria the RNAP catalytic core is composed of 2 alpha, 1 beta, 1 beta', 1 gamma and 1 omega subunit. When a sigma factor is associated with the core the holoenzyme is formed, which can initiate transcription.</text>
</comment>
<comment type="similarity">
    <text evidence="1">Belongs to the RNA polymerase beta' chain family. RpoC1 subfamily.</text>
</comment>
<reference key="1">
    <citation type="journal article" date="2003" name="Nature">
        <title>The genome of a motile marine Synechococcus.</title>
        <authorList>
            <person name="Palenik B."/>
            <person name="Brahamsha B."/>
            <person name="Larimer F.W."/>
            <person name="Land M.L."/>
            <person name="Hauser L."/>
            <person name="Chain P."/>
            <person name="Lamerdin J.E."/>
            <person name="Regala W."/>
            <person name="Allen E.E."/>
            <person name="McCarren J."/>
            <person name="Paulsen I.T."/>
            <person name="Dufresne A."/>
            <person name="Partensky F."/>
            <person name="Webb E.A."/>
            <person name="Waterbury J."/>
        </authorList>
    </citation>
    <scope>NUCLEOTIDE SEQUENCE [LARGE SCALE GENOMIC DNA]</scope>
    <source>
        <strain>WH8102</strain>
    </source>
</reference>
<sequence length="634" mass="72229">MTNSNLRTENHFDYVKITLASPERVMEWGQRTLPNGQVVGEVTKPETINYRTLKPEMDGLFCEKIFGPSKDWECHCGKYKRVRHRGIVCERCGVEVTESRVRRHRMGFIKLAAPVSHVWYLKGIPSYVAILLDMPLRDVEQIVYFNCYVVLDPGDHKELKYKQLLTEDEWLEIEDEIYAEESEIENEPVVGIGAEALKQLLEDLNLEEVAEQLREEINGSKGQKRAKLIKRLRVIDNFVATSARPEWMVLDVIPVIPPDLRPMVQLDGGRFATSDLNDLYRRVINRNNRLARLQEILAPEIIVRNEKRMLQEAVDALIDNGRRGRTVVGANNRPLKSLSDIIEGKQGRFRQNLLGKRVDYSGRSVIVVGPKLKMHQCGLPKEMAIELFQPFVIHRLIRQNIVNNIKAAKKLIQRADDEVMQVLQEVIDGHPIMLNRAPTLHRLGIQAFEPKLVDGRAIQLHPLVCPAFNADFDGDQMAVHVPLAIEAQTEARMLMLASNNILSPATGEPIVTPSQDMVLGSYYLTALQPGAEQPEFGDRSRTYSSLEDVIHAFEDTRIGLHDWVWVRFNGEVEDNDELDEPIKSETLSDGTRIEQWTYRRDRFDEDGALISRYILTTTGRVVMNHTIIGAVAAA</sequence>
<feature type="chain" id="PRO_0000067854" description="DNA-directed RNA polymerase subunit gamma">
    <location>
        <begin position="1"/>
        <end position="634"/>
    </location>
</feature>
<feature type="binding site" evidence="1">
    <location>
        <position position="74"/>
    </location>
    <ligand>
        <name>Zn(2+)</name>
        <dbReference type="ChEBI" id="CHEBI:29105"/>
    </ligand>
</feature>
<feature type="binding site" evidence="1">
    <location>
        <position position="76"/>
    </location>
    <ligand>
        <name>Zn(2+)</name>
        <dbReference type="ChEBI" id="CHEBI:29105"/>
    </ligand>
</feature>
<feature type="binding site" evidence="1">
    <location>
        <position position="89"/>
    </location>
    <ligand>
        <name>Zn(2+)</name>
        <dbReference type="ChEBI" id="CHEBI:29105"/>
    </ligand>
</feature>
<feature type="binding site" evidence="1">
    <location>
        <position position="92"/>
    </location>
    <ligand>
        <name>Zn(2+)</name>
        <dbReference type="ChEBI" id="CHEBI:29105"/>
    </ligand>
</feature>
<feature type="binding site" evidence="1">
    <location>
        <position position="471"/>
    </location>
    <ligand>
        <name>Mg(2+)</name>
        <dbReference type="ChEBI" id="CHEBI:18420"/>
    </ligand>
</feature>
<feature type="binding site" evidence="1">
    <location>
        <position position="473"/>
    </location>
    <ligand>
        <name>Mg(2+)</name>
        <dbReference type="ChEBI" id="CHEBI:18420"/>
    </ligand>
</feature>
<feature type="binding site" evidence="1">
    <location>
        <position position="475"/>
    </location>
    <ligand>
        <name>Mg(2+)</name>
        <dbReference type="ChEBI" id="CHEBI:18420"/>
    </ligand>
</feature>
<evidence type="ECO:0000255" key="1">
    <source>
        <dbReference type="HAMAP-Rule" id="MF_01323"/>
    </source>
</evidence>
<proteinExistence type="inferred from homology"/>
<gene>
    <name evidence="1" type="primary">rpoC1</name>
    <name type="ordered locus">SYNW0614</name>
</gene>
<accession>Q7U8K3</accession>
<protein>
    <recommendedName>
        <fullName evidence="1">DNA-directed RNA polymerase subunit gamma</fullName>
        <shortName evidence="1">RNAP subunit gamma</shortName>
        <ecNumber evidence="1">2.7.7.6</ecNumber>
    </recommendedName>
    <alternativeName>
        <fullName evidence="1">RNA polymerase subunit gamma</fullName>
    </alternativeName>
    <alternativeName>
        <fullName evidence="1">Transcriptase subunit gamma</fullName>
    </alternativeName>
</protein>
<name>RPOC1_PARMW</name>
<keyword id="KW-0240">DNA-directed RNA polymerase</keyword>
<keyword id="KW-0460">Magnesium</keyword>
<keyword id="KW-0479">Metal-binding</keyword>
<keyword id="KW-0548">Nucleotidyltransferase</keyword>
<keyword id="KW-0804">Transcription</keyword>
<keyword id="KW-0808">Transferase</keyword>
<keyword id="KW-0862">Zinc</keyword>
<organism>
    <name type="scientific">Parasynechococcus marenigrum (strain WH8102)</name>
    <dbReference type="NCBI Taxonomy" id="84588"/>
    <lineage>
        <taxon>Bacteria</taxon>
        <taxon>Bacillati</taxon>
        <taxon>Cyanobacteriota</taxon>
        <taxon>Cyanophyceae</taxon>
        <taxon>Synechococcales</taxon>
        <taxon>Prochlorococcaceae</taxon>
        <taxon>Parasynechococcus</taxon>
        <taxon>Parasynechococcus marenigrum</taxon>
    </lineage>
</organism>
<dbReference type="EC" id="2.7.7.6" evidence="1"/>
<dbReference type="EMBL" id="BX569690">
    <property type="protein sequence ID" value="CAE07129.1"/>
    <property type="molecule type" value="Genomic_DNA"/>
</dbReference>
<dbReference type="RefSeq" id="WP_011127481.1">
    <property type="nucleotide sequence ID" value="NC_005070.1"/>
</dbReference>
<dbReference type="SMR" id="Q7U8K3"/>
<dbReference type="STRING" id="84588.SYNW0614"/>
<dbReference type="KEGG" id="syw:SYNW0614"/>
<dbReference type="eggNOG" id="COG0086">
    <property type="taxonomic scope" value="Bacteria"/>
</dbReference>
<dbReference type="HOGENOM" id="CLU_030022_2_0_3"/>
<dbReference type="Proteomes" id="UP000001422">
    <property type="component" value="Chromosome"/>
</dbReference>
<dbReference type="GO" id="GO:0000428">
    <property type="term" value="C:DNA-directed RNA polymerase complex"/>
    <property type="evidence" value="ECO:0007669"/>
    <property type="project" value="UniProtKB-KW"/>
</dbReference>
<dbReference type="GO" id="GO:0003677">
    <property type="term" value="F:DNA binding"/>
    <property type="evidence" value="ECO:0007669"/>
    <property type="project" value="UniProtKB-UniRule"/>
</dbReference>
<dbReference type="GO" id="GO:0003899">
    <property type="term" value="F:DNA-directed RNA polymerase activity"/>
    <property type="evidence" value="ECO:0007669"/>
    <property type="project" value="UniProtKB-UniRule"/>
</dbReference>
<dbReference type="GO" id="GO:0000287">
    <property type="term" value="F:magnesium ion binding"/>
    <property type="evidence" value="ECO:0007669"/>
    <property type="project" value="UniProtKB-UniRule"/>
</dbReference>
<dbReference type="GO" id="GO:0008270">
    <property type="term" value="F:zinc ion binding"/>
    <property type="evidence" value="ECO:0007669"/>
    <property type="project" value="UniProtKB-UniRule"/>
</dbReference>
<dbReference type="GO" id="GO:0006351">
    <property type="term" value="P:DNA-templated transcription"/>
    <property type="evidence" value="ECO:0007669"/>
    <property type="project" value="UniProtKB-UniRule"/>
</dbReference>
<dbReference type="Gene3D" id="1.10.40.90">
    <property type="match status" value="1"/>
</dbReference>
<dbReference type="Gene3D" id="2.40.40.20">
    <property type="match status" value="1"/>
</dbReference>
<dbReference type="Gene3D" id="4.10.860.120">
    <property type="entry name" value="RNA polymerase II, clamp domain"/>
    <property type="match status" value="1"/>
</dbReference>
<dbReference type="Gene3D" id="1.10.274.100">
    <property type="entry name" value="RNA polymerase Rpb1, domain 3"/>
    <property type="match status" value="1"/>
</dbReference>
<dbReference type="HAMAP" id="MF_01323">
    <property type="entry name" value="RNApol_bact_RpoC1"/>
    <property type="match status" value="1"/>
</dbReference>
<dbReference type="InterPro" id="IPR012755">
    <property type="entry name" value="DNA-dir_RpoC1_gamma"/>
</dbReference>
<dbReference type="InterPro" id="IPR045867">
    <property type="entry name" value="DNA-dir_RpoC_beta_prime"/>
</dbReference>
<dbReference type="InterPro" id="IPR000722">
    <property type="entry name" value="RNA_pol_asu"/>
</dbReference>
<dbReference type="InterPro" id="IPR006592">
    <property type="entry name" value="RNA_pol_N"/>
</dbReference>
<dbReference type="InterPro" id="IPR007080">
    <property type="entry name" value="RNA_pol_Rpb1_1"/>
</dbReference>
<dbReference type="InterPro" id="IPR007066">
    <property type="entry name" value="RNA_pol_Rpb1_3"/>
</dbReference>
<dbReference type="InterPro" id="IPR042102">
    <property type="entry name" value="RNA_pol_Rpb1_3_sf"/>
</dbReference>
<dbReference type="InterPro" id="IPR044893">
    <property type="entry name" value="RNA_pol_Rpb1_clamp_domain"/>
</dbReference>
<dbReference type="InterPro" id="IPR034678">
    <property type="entry name" value="RNApol_RpoC1"/>
</dbReference>
<dbReference type="NCBIfam" id="NF002729">
    <property type="entry name" value="PRK02625.1"/>
    <property type="match status" value="1"/>
</dbReference>
<dbReference type="NCBIfam" id="TIGR02387">
    <property type="entry name" value="rpoC1_cyan"/>
    <property type="match status" value="1"/>
</dbReference>
<dbReference type="PANTHER" id="PTHR19376">
    <property type="entry name" value="DNA-DIRECTED RNA POLYMERASE"/>
    <property type="match status" value="1"/>
</dbReference>
<dbReference type="PANTHER" id="PTHR19376:SF54">
    <property type="entry name" value="DNA-DIRECTED RNA POLYMERASE SUBUNIT BETA"/>
    <property type="match status" value="1"/>
</dbReference>
<dbReference type="Pfam" id="PF04997">
    <property type="entry name" value="RNA_pol_Rpb1_1"/>
    <property type="match status" value="1"/>
</dbReference>
<dbReference type="Pfam" id="PF00623">
    <property type="entry name" value="RNA_pol_Rpb1_2"/>
    <property type="match status" value="1"/>
</dbReference>
<dbReference type="Pfam" id="PF04983">
    <property type="entry name" value="RNA_pol_Rpb1_3"/>
    <property type="match status" value="1"/>
</dbReference>
<dbReference type="SMART" id="SM00663">
    <property type="entry name" value="RPOLA_N"/>
    <property type="match status" value="1"/>
</dbReference>
<dbReference type="SUPFAM" id="SSF64484">
    <property type="entry name" value="beta and beta-prime subunits of DNA dependent RNA-polymerase"/>
    <property type="match status" value="1"/>
</dbReference>